<accession>A1S7I2</accession>
<feature type="chain" id="PRO_1000018385" description="Tryptophan synthase beta chain">
    <location>
        <begin position="1"/>
        <end position="397"/>
    </location>
</feature>
<feature type="modified residue" description="N6-(pyridoxal phosphate)lysine" evidence="1">
    <location>
        <position position="88"/>
    </location>
</feature>
<protein>
    <recommendedName>
        <fullName evidence="1">Tryptophan synthase beta chain</fullName>
        <ecNumber evidence="1">4.2.1.20</ecNumber>
    </recommendedName>
</protein>
<sequence>MSELKLDPYFGEYGGMYVPQILMPALKQLETAFVEAQQDPEFLTEFHDLLKNYAGRPTALTLTRNLSPNPKVKIYLKREDLLHGGAHKTNQVLGQALLAKRMGKKEIIAETGAGQHGVATALACALLGLKCKVYMGAKDVARQSPNVFRMRLMGAEVIPVTSGSATLKDACNEAMRDWSGSYDRAHYLLGTAAGPHPFPTIVREFQRMIGAETKAQMLEKEGRLPDAVIACVGGGSNAIGMFADFIDEPSVKLIGVEPAGKGIDTPMHGAPLKHGKTGIFFGMKAPLMQDAHGQIEESYSISAGLDFPSVGPQHAYLNATGRATYESATDDEALEAFQLLARSEGIIPALESAHALAYALRLAKDATEEQIIVVNLSGRGDKDIFTVSDILDGKASA</sequence>
<dbReference type="EC" id="4.2.1.20" evidence="1"/>
<dbReference type="EMBL" id="CP000507">
    <property type="protein sequence ID" value="ABM00339.1"/>
    <property type="molecule type" value="Genomic_DNA"/>
</dbReference>
<dbReference type="RefSeq" id="WP_011760246.1">
    <property type="nucleotide sequence ID" value="NC_008700.1"/>
</dbReference>
<dbReference type="SMR" id="A1S7I2"/>
<dbReference type="STRING" id="326297.Sama_2133"/>
<dbReference type="KEGG" id="saz:Sama_2133"/>
<dbReference type="eggNOG" id="COG0133">
    <property type="taxonomic scope" value="Bacteria"/>
</dbReference>
<dbReference type="HOGENOM" id="CLU_016734_3_1_6"/>
<dbReference type="OrthoDB" id="9766131at2"/>
<dbReference type="UniPathway" id="UPA00035">
    <property type="reaction ID" value="UER00044"/>
</dbReference>
<dbReference type="Proteomes" id="UP000009175">
    <property type="component" value="Chromosome"/>
</dbReference>
<dbReference type="GO" id="GO:0005737">
    <property type="term" value="C:cytoplasm"/>
    <property type="evidence" value="ECO:0007669"/>
    <property type="project" value="TreeGrafter"/>
</dbReference>
<dbReference type="GO" id="GO:0004834">
    <property type="term" value="F:tryptophan synthase activity"/>
    <property type="evidence" value="ECO:0007669"/>
    <property type="project" value="UniProtKB-UniRule"/>
</dbReference>
<dbReference type="CDD" id="cd06446">
    <property type="entry name" value="Trp-synth_B"/>
    <property type="match status" value="1"/>
</dbReference>
<dbReference type="FunFam" id="3.40.50.1100:FF:000001">
    <property type="entry name" value="Tryptophan synthase beta chain"/>
    <property type="match status" value="1"/>
</dbReference>
<dbReference type="FunFam" id="3.40.50.1100:FF:000004">
    <property type="entry name" value="Tryptophan synthase beta chain"/>
    <property type="match status" value="1"/>
</dbReference>
<dbReference type="Gene3D" id="3.40.50.1100">
    <property type="match status" value="2"/>
</dbReference>
<dbReference type="HAMAP" id="MF_00133">
    <property type="entry name" value="Trp_synth_beta"/>
    <property type="match status" value="1"/>
</dbReference>
<dbReference type="InterPro" id="IPR006653">
    <property type="entry name" value="Trp_synth_b_CS"/>
</dbReference>
<dbReference type="InterPro" id="IPR006654">
    <property type="entry name" value="Trp_synth_beta"/>
</dbReference>
<dbReference type="InterPro" id="IPR023026">
    <property type="entry name" value="Trp_synth_beta/beta-like"/>
</dbReference>
<dbReference type="InterPro" id="IPR001926">
    <property type="entry name" value="TrpB-like_PALP"/>
</dbReference>
<dbReference type="InterPro" id="IPR036052">
    <property type="entry name" value="TrpB-like_PALP_sf"/>
</dbReference>
<dbReference type="NCBIfam" id="TIGR00263">
    <property type="entry name" value="trpB"/>
    <property type="match status" value="1"/>
</dbReference>
<dbReference type="PANTHER" id="PTHR48077:SF3">
    <property type="entry name" value="TRYPTOPHAN SYNTHASE"/>
    <property type="match status" value="1"/>
</dbReference>
<dbReference type="PANTHER" id="PTHR48077">
    <property type="entry name" value="TRYPTOPHAN SYNTHASE-RELATED"/>
    <property type="match status" value="1"/>
</dbReference>
<dbReference type="Pfam" id="PF00291">
    <property type="entry name" value="PALP"/>
    <property type="match status" value="1"/>
</dbReference>
<dbReference type="PIRSF" id="PIRSF001413">
    <property type="entry name" value="Trp_syn_beta"/>
    <property type="match status" value="1"/>
</dbReference>
<dbReference type="SUPFAM" id="SSF53686">
    <property type="entry name" value="Tryptophan synthase beta subunit-like PLP-dependent enzymes"/>
    <property type="match status" value="1"/>
</dbReference>
<dbReference type="PROSITE" id="PS00168">
    <property type="entry name" value="TRP_SYNTHASE_BETA"/>
    <property type="match status" value="1"/>
</dbReference>
<comment type="function">
    <text evidence="1">The beta subunit is responsible for the synthesis of L-tryptophan from indole and L-serine.</text>
</comment>
<comment type="catalytic activity">
    <reaction evidence="1">
        <text>(1S,2R)-1-C-(indol-3-yl)glycerol 3-phosphate + L-serine = D-glyceraldehyde 3-phosphate + L-tryptophan + H2O</text>
        <dbReference type="Rhea" id="RHEA:10532"/>
        <dbReference type="ChEBI" id="CHEBI:15377"/>
        <dbReference type="ChEBI" id="CHEBI:33384"/>
        <dbReference type="ChEBI" id="CHEBI:57912"/>
        <dbReference type="ChEBI" id="CHEBI:58866"/>
        <dbReference type="ChEBI" id="CHEBI:59776"/>
        <dbReference type="EC" id="4.2.1.20"/>
    </reaction>
</comment>
<comment type="cofactor">
    <cofactor evidence="1">
        <name>pyridoxal 5'-phosphate</name>
        <dbReference type="ChEBI" id="CHEBI:597326"/>
    </cofactor>
</comment>
<comment type="pathway">
    <text evidence="1">Amino-acid biosynthesis; L-tryptophan biosynthesis; L-tryptophan from chorismate: step 5/5.</text>
</comment>
<comment type="subunit">
    <text evidence="1">Tetramer of two alpha and two beta chains.</text>
</comment>
<comment type="similarity">
    <text evidence="1">Belongs to the TrpB family.</text>
</comment>
<keyword id="KW-0028">Amino-acid biosynthesis</keyword>
<keyword id="KW-0057">Aromatic amino acid biosynthesis</keyword>
<keyword id="KW-0456">Lyase</keyword>
<keyword id="KW-0663">Pyridoxal phosphate</keyword>
<keyword id="KW-1185">Reference proteome</keyword>
<keyword id="KW-0822">Tryptophan biosynthesis</keyword>
<reference key="1">
    <citation type="submission" date="2006-12" db="EMBL/GenBank/DDBJ databases">
        <title>Complete sequence of Shewanella amazonensis SB2B.</title>
        <authorList>
            <consortium name="US DOE Joint Genome Institute"/>
            <person name="Copeland A."/>
            <person name="Lucas S."/>
            <person name="Lapidus A."/>
            <person name="Barry K."/>
            <person name="Detter J.C."/>
            <person name="Glavina del Rio T."/>
            <person name="Hammon N."/>
            <person name="Israni S."/>
            <person name="Dalin E."/>
            <person name="Tice H."/>
            <person name="Pitluck S."/>
            <person name="Munk A.C."/>
            <person name="Brettin T."/>
            <person name="Bruce D."/>
            <person name="Han C."/>
            <person name="Tapia R."/>
            <person name="Gilna P."/>
            <person name="Schmutz J."/>
            <person name="Larimer F."/>
            <person name="Land M."/>
            <person name="Hauser L."/>
            <person name="Kyrpides N."/>
            <person name="Mikhailova N."/>
            <person name="Fredrickson J."/>
            <person name="Richardson P."/>
        </authorList>
    </citation>
    <scope>NUCLEOTIDE SEQUENCE [LARGE SCALE GENOMIC DNA]</scope>
    <source>
        <strain>ATCC BAA-1098 / SB2B</strain>
    </source>
</reference>
<name>TRPB_SHEAM</name>
<evidence type="ECO:0000255" key="1">
    <source>
        <dbReference type="HAMAP-Rule" id="MF_00133"/>
    </source>
</evidence>
<organism>
    <name type="scientific">Shewanella amazonensis (strain ATCC BAA-1098 / SB2B)</name>
    <dbReference type="NCBI Taxonomy" id="326297"/>
    <lineage>
        <taxon>Bacteria</taxon>
        <taxon>Pseudomonadati</taxon>
        <taxon>Pseudomonadota</taxon>
        <taxon>Gammaproteobacteria</taxon>
        <taxon>Alteromonadales</taxon>
        <taxon>Shewanellaceae</taxon>
        <taxon>Shewanella</taxon>
    </lineage>
</organism>
<proteinExistence type="inferred from homology"/>
<gene>
    <name evidence="1" type="primary">trpB</name>
    <name type="ordered locus">Sama_2133</name>
</gene>